<organism>
    <name type="scientific">Escherichia coli O6:H1 (strain CFT073 / ATCC 700928 / UPEC)</name>
    <dbReference type="NCBI Taxonomy" id="199310"/>
    <lineage>
        <taxon>Bacteria</taxon>
        <taxon>Pseudomonadati</taxon>
        <taxon>Pseudomonadota</taxon>
        <taxon>Gammaproteobacteria</taxon>
        <taxon>Enterobacterales</taxon>
        <taxon>Enterobacteriaceae</taxon>
        <taxon>Escherichia</taxon>
    </lineage>
</organism>
<sequence>MKKALQVAMFSLFTVIGFNAQANEHHHETMSEAQPQVISATGVVKGVDLESKKITIHHDPIAAVNWPEMTMRFTITPQTKMSEIKTGDKVAFNFVQQGNLSLLQDIKVSQ</sequence>
<protein>
    <recommendedName>
        <fullName>Cation efflux system protein CusF</fullName>
    </recommendedName>
</protein>
<keyword id="KW-0186">Copper</keyword>
<keyword id="KW-0479">Metal-binding</keyword>
<keyword id="KW-0574">Periplasm</keyword>
<keyword id="KW-1185">Reference proteome</keyword>
<keyword id="KW-0732">Signal</keyword>
<name>CUSF_ECOL6</name>
<gene>
    <name type="primary">cusF</name>
    <name type="synonym">cusX</name>
    <name type="ordered locus">c0659</name>
</gene>
<dbReference type="EMBL" id="AE014075">
    <property type="protein sequence ID" value="AAN79134.1"/>
    <property type="molecule type" value="Genomic_DNA"/>
</dbReference>
<dbReference type="RefSeq" id="WP_000709873.1">
    <property type="nucleotide sequence ID" value="NZ_CP051263.1"/>
</dbReference>
<dbReference type="SMR" id="Q8CWA3"/>
<dbReference type="STRING" id="199310.c0659"/>
<dbReference type="GeneID" id="86863090"/>
<dbReference type="KEGG" id="ecc:c0659"/>
<dbReference type="eggNOG" id="COG5569">
    <property type="taxonomic scope" value="Bacteria"/>
</dbReference>
<dbReference type="HOGENOM" id="CLU_140852_2_1_6"/>
<dbReference type="BioCyc" id="ECOL199310:C0659-MONOMER"/>
<dbReference type="Proteomes" id="UP000001410">
    <property type="component" value="Chromosome"/>
</dbReference>
<dbReference type="GO" id="GO:0042597">
    <property type="term" value="C:periplasmic space"/>
    <property type="evidence" value="ECO:0007669"/>
    <property type="project" value="UniProtKB-SubCell"/>
</dbReference>
<dbReference type="GO" id="GO:0046872">
    <property type="term" value="F:metal ion binding"/>
    <property type="evidence" value="ECO:0007669"/>
    <property type="project" value="UniProtKB-KW"/>
</dbReference>
<dbReference type="FunFam" id="2.40.50.320:FF:000001">
    <property type="entry name" value="Cation efflux system protein CusF"/>
    <property type="match status" value="1"/>
</dbReference>
<dbReference type="Gene3D" id="2.40.50.320">
    <property type="entry name" value="Copper binding periplasmic protein CusF"/>
    <property type="match status" value="1"/>
</dbReference>
<dbReference type="InterPro" id="IPR021647">
    <property type="entry name" value="CusF_Ec"/>
</dbReference>
<dbReference type="InterPro" id="IPR042230">
    <property type="entry name" value="CusF_sf"/>
</dbReference>
<dbReference type="NCBIfam" id="NF007348">
    <property type="entry name" value="PRK09838.1"/>
    <property type="match status" value="1"/>
</dbReference>
<dbReference type="Pfam" id="PF11604">
    <property type="entry name" value="CusF_Ec"/>
    <property type="match status" value="1"/>
</dbReference>
<comment type="function">
    <text evidence="1">Part of a cation efflux system that mediates resistance to copper and silver. Binds one copper per polypeptide (By similarity).</text>
</comment>
<comment type="subunit">
    <text evidence="1">The cus efflux system is composed of CusA, CusB, CusC and CusF.</text>
</comment>
<comment type="subcellular location">
    <subcellularLocation>
        <location evidence="1">Periplasm</location>
    </subcellularLocation>
</comment>
<comment type="induction">
    <text evidence="2">Transcriptionally regulated by CusR in response to copper and silver ions.</text>
</comment>
<feature type="signal peptide" evidence="1">
    <location>
        <begin position="1"/>
        <end position="21"/>
    </location>
</feature>
<feature type="chain" id="PRO_0000021045" description="Cation efflux system protein CusF">
    <location>
        <begin position="22"/>
        <end position="110"/>
    </location>
</feature>
<accession>Q8CWA3</accession>
<reference key="1">
    <citation type="journal article" date="2002" name="Proc. Natl. Acad. Sci. U.S.A.">
        <title>Extensive mosaic structure revealed by the complete genome sequence of uropathogenic Escherichia coli.</title>
        <authorList>
            <person name="Welch R.A."/>
            <person name="Burland V."/>
            <person name="Plunkett G. III"/>
            <person name="Redford P."/>
            <person name="Roesch P."/>
            <person name="Rasko D."/>
            <person name="Buckles E.L."/>
            <person name="Liou S.-R."/>
            <person name="Boutin A."/>
            <person name="Hackett J."/>
            <person name="Stroud D."/>
            <person name="Mayhew G.F."/>
            <person name="Rose D.J."/>
            <person name="Zhou S."/>
            <person name="Schwartz D.C."/>
            <person name="Perna N.T."/>
            <person name="Mobley H.L.T."/>
            <person name="Donnenberg M.S."/>
            <person name="Blattner F.R."/>
        </authorList>
    </citation>
    <scope>NUCLEOTIDE SEQUENCE [LARGE SCALE GENOMIC DNA]</scope>
    <source>
        <strain>CFT073 / ATCC 700928 / UPEC</strain>
    </source>
</reference>
<proteinExistence type="inferred from homology"/>
<evidence type="ECO:0000250" key="1"/>
<evidence type="ECO:0000305" key="2"/>